<reference key="1">
    <citation type="journal article" date="2019" name="Mar. Drugs">
        <title>Transcriptomic-proteomic correlation in the predation-evoked venom of the cone snail, Conus imperialis.</title>
        <authorList>
            <person name="Jin A.H."/>
            <person name="Dutertre S."/>
            <person name="Dutt M."/>
            <person name="Lavergne V."/>
            <person name="Jones A."/>
            <person name="Lewis R.J."/>
            <person name="Alewood P.F."/>
        </authorList>
    </citation>
    <scope>NUCLEOTIDE SEQUENCE [MRNA]</scope>
    <scope>IDENTIFICATION BY MASS SPECTROMETRY</scope>
    <scope>SUBCELLULAR LOCATION</scope>
    <source>
        <tissue>Venom</tissue>
        <tissue>Venom duct</tissue>
    </source>
</reference>
<comment type="function">
    <text evidence="5">Probable neurotoxin.</text>
</comment>
<comment type="subcellular location">
    <subcellularLocation>
        <location evidence="3">Secreted</location>
    </subcellularLocation>
</comment>
<comment type="tissue specificity">
    <text evidence="6">Expressed by the venom duct.</text>
</comment>
<comment type="domain">
    <text evidence="5">The cysteine framework is XI (C-C-CC-CC-C-C).</text>
</comment>
<comment type="similarity">
    <text evidence="5">Belongs to the conotoxin I2 superfamily.</text>
</comment>
<dbReference type="EMBL" id="KT377401">
    <property type="protein sequence ID" value="AME17665.1"/>
    <property type="molecule type" value="mRNA"/>
</dbReference>
<dbReference type="GO" id="GO:0005576">
    <property type="term" value="C:extracellular region"/>
    <property type="evidence" value="ECO:0007669"/>
    <property type="project" value="UniProtKB-SubCell"/>
</dbReference>
<dbReference type="GO" id="GO:0090729">
    <property type="term" value="F:toxin activity"/>
    <property type="evidence" value="ECO:0007669"/>
    <property type="project" value="UniProtKB-KW"/>
</dbReference>
<keyword id="KW-1015">Disulfide bond</keyword>
<keyword id="KW-0528">Neurotoxin</keyword>
<keyword id="KW-0964">Secreted</keyword>
<keyword id="KW-0732">Signal</keyword>
<keyword id="KW-0800">Toxin</keyword>
<sequence length="62" mass="6933">MFRVTSVLLVIVLLNLVVLTNACHMDCSKMTCCSGICCFYCGRPMCPGTRRALLQRLVGHQR</sequence>
<proteinExistence type="evidence at protein level"/>
<protein>
    <recommendedName>
        <fullName evidence="5">Conotoxin Im11.9</fullName>
    </recommendedName>
    <alternativeName>
        <fullName evidence="4 7">Conopeptide im007</fullName>
    </alternativeName>
</protein>
<name>I2B9_CONIM</name>
<accession>A0A125S9E1</accession>
<evidence type="ECO:0000250" key="1">
    <source>
        <dbReference type="UniProtKB" id="Q7Z094"/>
    </source>
</evidence>
<evidence type="ECO:0000255" key="2"/>
<evidence type="ECO:0000269" key="3">
    <source>
    </source>
</evidence>
<evidence type="ECO:0000303" key="4">
    <source>
    </source>
</evidence>
<evidence type="ECO:0000305" key="5"/>
<evidence type="ECO:0000305" key="6">
    <source>
    </source>
</evidence>
<evidence type="ECO:0000312" key="7">
    <source>
        <dbReference type="EMBL" id="AME17665.1"/>
    </source>
</evidence>
<feature type="signal peptide" evidence="2">
    <location>
        <begin position="1"/>
        <end position="22"/>
    </location>
</feature>
<feature type="propeptide" id="PRO_0000450998" evidence="5">
    <location>
        <begin position="23"/>
        <end position="49"/>
    </location>
</feature>
<feature type="peptide" id="PRO_5007179718" description="Conotoxin Im11.9">
    <location>
        <begin position="50"/>
        <end position="62"/>
    </location>
</feature>
<feature type="disulfide bond" evidence="1">
    <location>
        <begin position="23"/>
        <end position="33"/>
    </location>
</feature>
<feature type="disulfide bond" evidence="1">
    <location>
        <begin position="27"/>
        <end position="38"/>
    </location>
</feature>
<feature type="disulfide bond" evidence="1">
    <location>
        <begin position="32"/>
        <end position="41"/>
    </location>
</feature>
<feature type="disulfide bond" evidence="1">
    <location>
        <begin position="37"/>
        <end position="46"/>
    </location>
</feature>
<organism>
    <name type="scientific">Conus imperialis</name>
    <name type="common">Imperial cone</name>
    <dbReference type="NCBI Taxonomy" id="35631"/>
    <lineage>
        <taxon>Eukaryota</taxon>
        <taxon>Metazoa</taxon>
        <taxon>Spiralia</taxon>
        <taxon>Lophotrochozoa</taxon>
        <taxon>Mollusca</taxon>
        <taxon>Gastropoda</taxon>
        <taxon>Caenogastropoda</taxon>
        <taxon>Neogastropoda</taxon>
        <taxon>Conoidea</taxon>
        <taxon>Conidae</taxon>
        <taxon>Conus</taxon>
        <taxon>Stephanoconus</taxon>
    </lineage>
</organism>